<keyword id="KW-0413">Isomerase</keyword>
<keyword id="KW-1185">Reference proteome</keyword>
<dbReference type="EC" id="5.3.1.6" evidence="1"/>
<dbReference type="EMBL" id="AE004969">
    <property type="protein sequence ID" value="AAW89656.1"/>
    <property type="molecule type" value="Genomic_DNA"/>
</dbReference>
<dbReference type="RefSeq" id="WP_003688327.1">
    <property type="nucleotide sequence ID" value="NC_002946.2"/>
</dbReference>
<dbReference type="RefSeq" id="YP_208068.1">
    <property type="nucleotide sequence ID" value="NC_002946.2"/>
</dbReference>
<dbReference type="SMR" id="Q5F831"/>
<dbReference type="STRING" id="242231.NGO_0970"/>
<dbReference type="GeneID" id="66753291"/>
<dbReference type="KEGG" id="ngo:NGO_0970"/>
<dbReference type="PATRIC" id="fig|242231.10.peg.1136"/>
<dbReference type="HOGENOM" id="CLU_056590_1_1_4"/>
<dbReference type="UniPathway" id="UPA00115">
    <property type="reaction ID" value="UER00412"/>
</dbReference>
<dbReference type="Proteomes" id="UP000000535">
    <property type="component" value="Chromosome"/>
</dbReference>
<dbReference type="GO" id="GO:0005829">
    <property type="term" value="C:cytosol"/>
    <property type="evidence" value="ECO:0007669"/>
    <property type="project" value="TreeGrafter"/>
</dbReference>
<dbReference type="GO" id="GO:0004751">
    <property type="term" value="F:ribose-5-phosphate isomerase activity"/>
    <property type="evidence" value="ECO:0007669"/>
    <property type="project" value="UniProtKB-UniRule"/>
</dbReference>
<dbReference type="GO" id="GO:0006014">
    <property type="term" value="P:D-ribose metabolic process"/>
    <property type="evidence" value="ECO:0007669"/>
    <property type="project" value="TreeGrafter"/>
</dbReference>
<dbReference type="GO" id="GO:0009052">
    <property type="term" value="P:pentose-phosphate shunt, non-oxidative branch"/>
    <property type="evidence" value="ECO:0007669"/>
    <property type="project" value="UniProtKB-UniRule"/>
</dbReference>
<dbReference type="CDD" id="cd01398">
    <property type="entry name" value="RPI_A"/>
    <property type="match status" value="1"/>
</dbReference>
<dbReference type="FunFam" id="3.40.50.1360:FF:000001">
    <property type="entry name" value="Ribose-5-phosphate isomerase A"/>
    <property type="match status" value="1"/>
</dbReference>
<dbReference type="Gene3D" id="3.30.70.260">
    <property type="match status" value="1"/>
</dbReference>
<dbReference type="Gene3D" id="3.40.50.1360">
    <property type="match status" value="1"/>
</dbReference>
<dbReference type="HAMAP" id="MF_00170">
    <property type="entry name" value="Rib_5P_isom_A"/>
    <property type="match status" value="1"/>
</dbReference>
<dbReference type="InterPro" id="IPR037171">
    <property type="entry name" value="NagB/RpiA_transferase-like"/>
</dbReference>
<dbReference type="InterPro" id="IPR020672">
    <property type="entry name" value="Ribose5P_isomerase_typA_subgr"/>
</dbReference>
<dbReference type="InterPro" id="IPR004788">
    <property type="entry name" value="Ribose5P_isomerase_type_A"/>
</dbReference>
<dbReference type="NCBIfam" id="NF001924">
    <property type="entry name" value="PRK00702.1"/>
    <property type="match status" value="1"/>
</dbReference>
<dbReference type="NCBIfam" id="TIGR00021">
    <property type="entry name" value="rpiA"/>
    <property type="match status" value="1"/>
</dbReference>
<dbReference type="PANTHER" id="PTHR11934">
    <property type="entry name" value="RIBOSE-5-PHOSPHATE ISOMERASE"/>
    <property type="match status" value="1"/>
</dbReference>
<dbReference type="PANTHER" id="PTHR11934:SF0">
    <property type="entry name" value="RIBOSE-5-PHOSPHATE ISOMERASE"/>
    <property type="match status" value="1"/>
</dbReference>
<dbReference type="Pfam" id="PF06026">
    <property type="entry name" value="Rib_5-P_isom_A"/>
    <property type="match status" value="1"/>
</dbReference>
<dbReference type="SUPFAM" id="SSF75445">
    <property type="entry name" value="D-ribose-5-phosphate isomerase (RpiA), lid domain"/>
    <property type="match status" value="1"/>
</dbReference>
<dbReference type="SUPFAM" id="SSF100950">
    <property type="entry name" value="NagB/RpiA/CoA transferase-like"/>
    <property type="match status" value="1"/>
</dbReference>
<reference key="1">
    <citation type="submission" date="2003-03" db="EMBL/GenBank/DDBJ databases">
        <title>The complete genome sequence of Neisseria gonorrhoeae.</title>
        <authorList>
            <person name="Lewis L.A."/>
            <person name="Gillaspy A.F."/>
            <person name="McLaughlin R.E."/>
            <person name="Gipson M."/>
            <person name="Ducey T.F."/>
            <person name="Ownbey T."/>
            <person name="Hartman K."/>
            <person name="Nydick C."/>
            <person name="Carson M.B."/>
            <person name="Vaughn J."/>
            <person name="Thomson C."/>
            <person name="Song L."/>
            <person name="Lin S."/>
            <person name="Yuan X."/>
            <person name="Najar F."/>
            <person name="Zhan M."/>
            <person name="Ren Q."/>
            <person name="Zhu H."/>
            <person name="Qi S."/>
            <person name="Kenton S.M."/>
            <person name="Lai H."/>
            <person name="White J.D."/>
            <person name="Clifton S."/>
            <person name="Roe B.A."/>
            <person name="Dyer D.W."/>
        </authorList>
    </citation>
    <scope>NUCLEOTIDE SEQUENCE [LARGE SCALE GENOMIC DNA]</scope>
    <source>
        <strain>ATCC 700825 / FA 1090</strain>
    </source>
</reference>
<sequence>MTTQDELKRIAAEKAVEFVPENEYIGIGTGSTINFFIEALGKSGKKIKGAVSTSKKSGELLARYDIPVVSLNEVSGLAVYIDGADEVNHALQMIKGGGGAHLNEKIVASASEKFVCIADESKYVSRLGKFPLPVEAVESARSLVSRKLLAMGGQPELRIGYTTFYGNQIVDVHGLNIDQPLTMEDEINKITGVLENGIFARDAADVLILGTEEGAKVIYPCQG</sequence>
<organism>
    <name type="scientific">Neisseria gonorrhoeae (strain ATCC 700825 / FA 1090)</name>
    <dbReference type="NCBI Taxonomy" id="242231"/>
    <lineage>
        <taxon>Bacteria</taxon>
        <taxon>Pseudomonadati</taxon>
        <taxon>Pseudomonadota</taxon>
        <taxon>Betaproteobacteria</taxon>
        <taxon>Neisseriales</taxon>
        <taxon>Neisseriaceae</taxon>
        <taxon>Neisseria</taxon>
    </lineage>
</organism>
<proteinExistence type="inferred from homology"/>
<feature type="chain" id="PRO_0000158437" description="Ribose-5-phosphate isomerase A">
    <location>
        <begin position="1"/>
        <end position="223"/>
    </location>
</feature>
<feature type="active site" description="Proton acceptor" evidence="1">
    <location>
        <position position="104"/>
    </location>
</feature>
<feature type="binding site" evidence="1">
    <location>
        <begin position="29"/>
        <end position="32"/>
    </location>
    <ligand>
        <name>substrate</name>
    </ligand>
</feature>
<feature type="binding site" evidence="1">
    <location>
        <begin position="82"/>
        <end position="85"/>
    </location>
    <ligand>
        <name>substrate</name>
    </ligand>
</feature>
<feature type="binding site" evidence="1">
    <location>
        <begin position="95"/>
        <end position="98"/>
    </location>
    <ligand>
        <name>substrate</name>
    </ligand>
</feature>
<feature type="binding site" evidence="1">
    <location>
        <position position="122"/>
    </location>
    <ligand>
        <name>substrate</name>
    </ligand>
</feature>
<evidence type="ECO:0000255" key="1">
    <source>
        <dbReference type="HAMAP-Rule" id="MF_00170"/>
    </source>
</evidence>
<protein>
    <recommendedName>
        <fullName evidence="1">Ribose-5-phosphate isomerase A</fullName>
        <ecNumber evidence="1">5.3.1.6</ecNumber>
    </recommendedName>
    <alternativeName>
        <fullName evidence="1">Phosphoriboisomerase A</fullName>
        <shortName evidence="1">PRI</shortName>
    </alternativeName>
</protein>
<comment type="function">
    <text evidence="1">Catalyzes the reversible conversion of ribose-5-phosphate to ribulose 5-phosphate.</text>
</comment>
<comment type="catalytic activity">
    <reaction evidence="1">
        <text>aldehydo-D-ribose 5-phosphate = D-ribulose 5-phosphate</text>
        <dbReference type="Rhea" id="RHEA:14657"/>
        <dbReference type="ChEBI" id="CHEBI:58121"/>
        <dbReference type="ChEBI" id="CHEBI:58273"/>
        <dbReference type="EC" id="5.3.1.6"/>
    </reaction>
</comment>
<comment type="pathway">
    <text evidence="1">Carbohydrate degradation; pentose phosphate pathway; D-ribose 5-phosphate from D-ribulose 5-phosphate (non-oxidative stage): step 1/1.</text>
</comment>
<comment type="subunit">
    <text evidence="1">Homodimer.</text>
</comment>
<comment type="similarity">
    <text evidence="1">Belongs to the ribose 5-phosphate isomerase family.</text>
</comment>
<accession>Q5F831</accession>
<name>RPIA_NEIG1</name>
<gene>
    <name evidence="1" type="primary">rpiA</name>
    <name type="ordered locus">NGO_0970</name>
</gene>